<keyword id="KW-0272">Extracellular matrix</keyword>
<keyword id="KW-0325">Glycoprotein</keyword>
<keyword id="KW-1185">Reference proteome</keyword>
<keyword id="KW-0677">Repeat</keyword>
<keyword id="KW-0964">Secreted</keyword>
<keyword id="KW-0732">Signal</keyword>
<name>NDNF_DROME</name>
<evidence type="ECO:0000255" key="1"/>
<evidence type="ECO:0000255" key="2">
    <source>
        <dbReference type="PROSITE-ProRule" id="PRU00498"/>
    </source>
</evidence>
<evidence type="ECO:0000269" key="3">
    <source>
    </source>
</evidence>
<evidence type="ECO:0000269" key="4">
    <source>
    </source>
</evidence>
<evidence type="ECO:0000303" key="5">
    <source>
    </source>
</evidence>
<evidence type="ECO:0000303" key="6">
    <source>
    </source>
</evidence>
<evidence type="ECO:0000305" key="7"/>
<evidence type="ECO:0000312" key="8">
    <source>
        <dbReference type="EMBL" id="AAL68317.1"/>
    </source>
</evidence>
<evidence type="ECO:0000312" key="9">
    <source>
        <dbReference type="EMBL" id="AFI71915.1"/>
    </source>
</evidence>
<evidence type="ECO:0000312" key="10">
    <source>
        <dbReference type="FlyBase" id="FBgn0050418"/>
    </source>
</evidence>
<evidence type="ECO:0000312" key="11">
    <source>
        <dbReference type="Proteomes" id="UP000000803"/>
    </source>
</evidence>
<reference evidence="11" key="1">
    <citation type="journal article" date="2000" name="Science">
        <title>The genome sequence of Drosophila melanogaster.</title>
        <authorList>
            <person name="Adams M.D."/>
            <person name="Celniker S.E."/>
            <person name="Holt R.A."/>
            <person name="Evans C.A."/>
            <person name="Gocayne J.D."/>
            <person name="Amanatides P.G."/>
            <person name="Scherer S.E."/>
            <person name="Li P.W."/>
            <person name="Hoskins R.A."/>
            <person name="Galle R.F."/>
            <person name="George R.A."/>
            <person name="Lewis S.E."/>
            <person name="Richards S."/>
            <person name="Ashburner M."/>
            <person name="Henderson S.N."/>
            <person name="Sutton G.G."/>
            <person name="Wortman J.R."/>
            <person name="Yandell M.D."/>
            <person name="Zhang Q."/>
            <person name="Chen L.X."/>
            <person name="Brandon R.C."/>
            <person name="Rogers Y.-H.C."/>
            <person name="Blazej R.G."/>
            <person name="Champe M."/>
            <person name="Pfeiffer B.D."/>
            <person name="Wan K.H."/>
            <person name="Doyle C."/>
            <person name="Baxter E.G."/>
            <person name="Helt G."/>
            <person name="Nelson C.R."/>
            <person name="Miklos G.L.G."/>
            <person name="Abril J.F."/>
            <person name="Agbayani A."/>
            <person name="An H.-J."/>
            <person name="Andrews-Pfannkoch C."/>
            <person name="Baldwin D."/>
            <person name="Ballew R.M."/>
            <person name="Basu A."/>
            <person name="Baxendale J."/>
            <person name="Bayraktaroglu L."/>
            <person name="Beasley E.M."/>
            <person name="Beeson K.Y."/>
            <person name="Benos P.V."/>
            <person name="Berman B.P."/>
            <person name="Bhandari D."/>
            <person name="Bolshakov S."/>
            <person name="Borkova D."/>
            <person name="Botchan M.R."/>
            <person name="Bouck J."/>
            <person name="Brokstein P."/>
            <person name="Brottier P."/>
            <person name="Burtis K.C."/>
            <person name="Busam D.A."/>
            <person name="Butler H."/>
            <person name="Cadieu E."/>
            <person name="Center A."/>
            <person name="Chandra I."/>
            <person name="Cherry J.M."/>
            <person name="Cawley S."/>
            <person name="Dahlke C."/>
            <person name="Davenport L.B."/>
            <person name="Davies P."/>
            <person name="de Pablos B."/>
            <person name="Delcher A."/>
            <person name="Deng Z."/>
            <person name="Mays A.D."/>
            <person name="Dew I."/>
            <person name="Dietz S.M."/>
            <person name="Dodson K."/>
            <person name="Doup L.E."/>
            <person name="Downes M."/>
            <person name="Dugan-Rocha S."/>
            <person name="Dunkov B.C."/>
            <person name="Dunn P."/>
            <person name="Durbin K.J."/>
            <person name="Evangelista C.C."/>
            <person name="Ferraz C."/>
            <person name="Ferriera S."/>
            <person name="Fleischmann W."/>
            <person name="Fosler C."/>
            <person name="Gabrielian A.E."/>
            <person name="Garg N.S."/>
            <person name="Gelbart W.M."/>
            <person name="Glasser K."/>
            <person name="Glodek A."/>
            <person name="Gong F."/>
            <person name="Gorrell J.H."/>
            <person name="Gu Z."/>
            <person name="Guan P."/>
            <person name="Harris M."/>
            <person name="Harris N.L."/>
            <person name="Harvey D.A."/>
            <person name="Heiman T.J."/>
            <person name="Hernandez J.R."/>
            <person name="Houck J."/>
            <person name="Hostin D."/>
            <person name="Houston K.A."/>
            <person name="Howland T.J."/>
            <person name="Wei M.-H."/>
            <person name="Ibegwam C."/>
            <person name="Jalali M."/>
            <person name="Kalush F."/>
            <person name="Karpen G.H."/>
            <person name="Ke Z."/>
            <person name="Kennison J.A."/>
            <person name="Ketchum K.A."/>
            <person name="Kimmel B.E."/>
            <person name="Kodira C.D."/>
            <person name="Kraft C.L."/>
            <person name="Kravitz S."/>
            <person name="Kulp D."/>
            <person name="Lai Z."/>
            <person name="Lasko P."/>
            <person name="Lei Y."/>
            <person name="Levitsky A.A."/>
            <person name="Li J.H."/>
            <person name="Li Z."/>
            <person name="Liang Y."/>
            <person name="Lin X."/>
            <person name="Liu X."/>
            <person name="Mattei B."/>
            <person name="McIntosh T.C."/>
            <person name="McLeod M.P."/>
            <person name="McPherson D."/>
            <person name="Merkulov G."/>
            <person name="Milshina N.V."/>
            <person name="Mobarry C."/>
            <person name="Morris J."/>
            <person name="Moshrefi A."/>
            <person name="Mount S.M."/>
            <person name="Moy M."/>
            <person name="Murphy B."/>
            <person name="Murphy L."/>
            <person name="Muzny D.M."/>
            <person name="Nelson D.L."/>
            <person name="Nelson D.R."/>
            <person name="Nelson K.A."/>
            <person name="Nixon K."/>
            <person name="Nusskern D.R."/>
            <person name="Pacleb J.M."/>
            <person name="Palazzolo M."/>
            <person name="Pittman G.S."/>
            <person name="Pan S."/>
            <person name="Pollard J."/>
            <person name="Puri V."/>
            <person name="Reese M.G."/>
            <person name="Reinert K."/>
            <person name="Remington K."/>
            <person name="Saunders R.D.C."/>
            <person name="Scheeler F."/>
            <person name="Shen H."/>
            <person name="Shue B.C."/>
            <person name="Siden-Kiamos I."/>
            <person name="Simpson M."/>
            <person name="Skupski M.P."/>
            <person name="Smith T.J."/>
            <person name="Spier E."/>
            <person name="Spradling A.C."/>
            <person name="Stapleton M."/>
            <person name="Strong R."/>
            <person name="Sun E."/>
            <person name="Svirskas R."/>
            <person name="Tector C."/>
            <person name="Turner R."/>
            <person name="Venter E."/>
            <person name="Wang A.H."/>
            <person name="Wang X."/>
            <person name="Wang Z.-Y."/>
            <person name="Wassarman D.A."/>
            <person name="Weinstock G.M."/>
            <person name="Weissenbach J."/>
            <person name="Williams S.M."/>
            <person name="Woodage T."/>
            <person name="Worley K.C."/>
            <person name="Wu D."/>
            <person name="Yang S."/>
            <person name="Yao Q.A."/>
            <person name="Ye J."/>
            <person name="Yeh R.-F."/>
            <person name="Zaveri J.S."/>
            <person name="Zhan M."/>
            <person name="Zhang G."/>
            <person name="Zhao Q."/>
            <person name="Zheng L."/>
            <person name="Zheng X.H."/>
            <person name="Zhong F.N."/>
            <person name="Zhong W."/>
            <person name="Zhou X."/>
            <person name="Zhu S.C."/>
            <person name="Zhu X."/>
            <person name="Smith H.O."/>
            <person name="Gibbs R.A."/>
            <person name="Myers E.W."/>
            <person name="Rubin G.M."/>
            <person name="Venter J.C."/>
        </authorList>
    </citation>
    <scope>NUCLEOTIDE SEQUENCE [LARGE SCALE GENOMIC DNA]</scope>
    <source>
        <strain evidence="11">Berkeley</strain>
    </source>
</reference>
<reference evidence="11" key="2">
    <citation type="journal article" date="2002" name="Genome Biol.">
        <title>Annotation of the Drosophila melanogaster euchromatic genome: a systematic review.</title>
        <authorList>
            <person name="Misra S."/>
            <person name="Crosby M.A."/>
            <person name="Mungall C.J."/>
            <person name="Matthews B.B."/>
            <person name="Campbell K.S."/>
            <person name="Hradecky P."/>
            <person name="Huang Y."/>
            <person name="Kaminker J.S."/>
            <person name="Millburn G.H."/>
            <person name="Prochnik S.E."/>
            <person name="Smith C.D."/>
            <person name="Tupy J.L."/>
            <person name="Whitfield E.J."/>
            <person name="Bayraktaroglu L."/>
            <person name="Berman B.P."/>
            <person name="Bettencourt B.R."/>
            <person name="Celniker S.E."/>
            <person name="de Grey A.D.N.J."/>
            <person name="Drysdale R.A."/>
            <person name="Harris N.L."/>
            <person name="Richter J."/>
            <person name="Russo S."/>
            <person name="Schroeder A.J."/>
            <person name="Shu S.Q."/>
            <person name="Stapleton M."/>
            <person name="Yamada C."/>
            <person name="Ashburner M."/>
            <person name="Gelbart W.M."/>
            <person name="Rubin G.M."/>
            <person name="Lewis S.E."/>
        </authorList>
    </citation>
    <scope>GENOME REANNOTATION</scope>
    <source>
        <strain evidence="11">Berkeley</strain>
    </source>
</reference>
<reference evidence="8" key="3">
    <citation type="journal article" date="2002" name="Genome Biol.">
        <title>A Drosophila full-length cDNA resource.</title>
        <authorList>
            <person name="Stapleton M."/>
            <person name="Carlson J.W."/>
            <person name="Brokstein P."/>
            <person name="Yu C."/>
            <person name="Champe M."/>
            <person name="George R.A."/>
            <person name="Guarin H."/>
            <person name="Kronmiller B."/>
            <person name="Pacleb J.M."/>
            <person name="Park S."/>
            <person name="Wan K.H."/>
            <person name="Rubin G.M."/>
            <person name="Celniker S.E."/>
        </authorList>
    </citation>
    <scope>NUCLEOTIDE SEQUENCE [LARGE SCALE MRNA]</scope>
    <source>
        <strain evidence="8">Berkeley</strain>
        <tissue evidence="8">Embryo</tissue>
    </source>
</reference>
<reference evidence="9" key="4">
    <citation type="submission" date="2012-05" db="EMBL/GenBank/DDBJ databases">
        <authorList>
            <person name="Carlson J."/>
            <person name="Booth B."/>
            <person name="Frise E."/>
            <person name="Park S."/>
            <person name="Wan K."/>
            <person name="Yu C."/>
            <person name="Celniker S."/>
        </authorList>
    </citation>
    <scope>NUCLEOTIDE SEQUENCE [LARGE SCALE MRNA]</scope>
</reference>
<reference evidence="7" key="5">
    <citation type="journal article" date="2022" name="Dev. Biol.">
        <title>The feedback regulator Nord controls Dpp/BMP signaling via extracellular interaction with Dally in the Drosophila wing.</title>
        <authorList>
            <person name="Akiyama T."/>
            <person name="Seidel C.W."/>
            <person name="Gibson M.C."/>
        </authorList>
    </citation>
    <scope>FUNCTION</scope>
    <scope>INTERACTION WITH DALLY</scope>
    <scope>HEPARIN-BINDING</scope>
    <scope>SUBCELLULAR LOCATION</scope>
    <scope>DEVELOPMENTAL STAGE</scope>
</reference>
<reference evidence="7" key="6">
    <citation type="journal article" date="2022" name="Elife">
        <title>The NDNF-like factor Nord is a Hedgehog-induced extracellular BMP modulator that regulates Drosophila wing patterning and growth.</title>
        <authorList>
            <person name="Yang S."/>
            <person name="Wu X."/>
            <person name="Daoutidou E.I."/>
            <person name="Zhang Y."/>
            <person name="Shimell M."/>
            <person name="Chuang K.H."/>
            <person name="Peterson A.J."/>
            <person name="O'Connor M.B."/>
            <person name="Zheng X."/>
        </authorList>
    </citation>
    <scope>FUNCTION</scope>
    <scope>INTERACTION WITH DPP AND GBB</scope>
    <scope>SUBCELLULAR LOCATION</scope>
    <scope>DEVELOPMENTAL STAGE</scope>
</reference>
<dbReference type="EMBL" id="AE013599">
    <property type="protein sequence ID" value="AAF47185.2"/>
    <property type="molecule type" value="Genomic_DNA"/>
</dbReference>
<dbReference type="EMBL" id="AY075508">
    <property type="protein sequence ID" value="AAL68317.1"/>
    <property type="molecule type" value="mRNA"/>
</dbReference>
<dbReference type="EMBL" id="BT133485">
    <property type="protein sequence ID" value="AFI71915.1"/>
    <property type="molecule type" value="mRNA"/>
</dbReference>
<dbReference type="RefSeq" id="NP_611900.1">
    <property type="nucleotide sequence ID" value="NM_138056.3"/>
</dbReference>
<dbReference type="FunCoup" id="Q9W192">
    <property type="interactions" value="12"/>
</dbReference>
<dbReference type="IntAct" id="Q9W192">
    <property type="interactions" value="2"/>
</dbReference>
<dbReference type="STRING" id="7227.FBpp0072170"/>
<dbReference type="GlyGen" id="Q9W192">
    <property type="glycosylation" value="9 sites"/>
</dbReference>
<dbReference type="PaxDb" id="7227-FBpp0072170"/>
<dbReference type="DNASU" id="37882"/>
<dbReference type="EnsemblMetazoa" id="FBtr0072263">
    <property type="protein sequence ID" value="FBpp0072170"/>
    <property type="gene ID" value="FBgn0050418"/>
</dbReference>
<dbReference type="GeneID" id="37882"/>
<dbReference type="KEGG" id="dme:Dmel_CG30418"/>
<dbReference type="UCSC" id="CG30418-RA">
    <property type="organism name" value="d. melanogaster"/>
</dbReference>
<dbReference type="AGR" id="FB:FBgn0050418"/>
<dbReference type="CTD" id="37882"/>
<dbReference type="FlyBase" id="FBgn0050418">
    <property type="gene designation" value="nord"/>
</dbReference>
<dbReference type="VEuPathDB" id="VectorBase:FBgn0050418"/>
<dbReference type="eggNOG" id="KOG4806">
    <property type="taxonomic scope" value="Eukaryota"/>
</dbReference>
<dbReference type="GeneTree" id="ENSGT00390000007586"/>
<dbReference type="HOGENOM" id="CLU_468744_0_0_1"/>
<dbReference type="InParanoid" id="Q9W192"/>
<dbReference type="OMA" id="PCAGSEI"/>
<dbReference type="OrthoDB" id="9872501at2759"/>
<dbReference type="BioGRID-ORCS" id="37882">
    <property type="hits" value="0 hits in 1 CRISPR screen"/>
</dbReference>
<dbReference type="GenomeRNAi" id="37882"/>
<dbReference type="PRO" id="PR:Q9W192"/>
<dbReference type="Proteomes" id="UP000000803">
    <property type="component" value="Chromosome 2R"/>
</dbReference>
<dbReference type="Bgee" id="FBgn0050418">
    <property type="expression patterns" value="Expressed in posterior terminal follicle cell in ovary and 42 other cell types or tissues"/>
</dbReference>
<dbReference type="ExpressionAtlas" id="Q9W192">
    <property type="expression patterns" value="baseline and differential"/>
</dbReference>
<dbReference type="GO" id="GO:0031012">
    <property type="term" value="C:extracellular matrix"/>
    <property type="evidence" value="ECO:0000250"/>
    <property type="project" value="FlyBase"/>
</dbReference>
<dbReference type="GO" id="GO:0005615">
    <property type="term" value="C:extracellular space"/>
    <property type="evidence" value="ECO:0000314"/>
    <property type="project" value="FlyBase"/>
</dbReference>
<dbReference type="GO" id="GO:0036122">
    <property type="term" value="F:BMP binding"/>
    <property type="evidence" value="ECO:0000314"/>
    <property type="project" value="FlyBase"/>
</dbReference>
<dbReference type="GO" id="GO:0097367">
    <property type="term" value="F:carbohydrate derivative binding"/>
    <property type="evidence" value="ECO:0000250"/>
    <property type="project" value="FlyBase"/>
</dbReference>
<dbReference type="GO" id="GO:0140032">
    <property type="term" value="F:glycosylation-dependent protein binding"/>
    <property type="evidence" value="ECO:0000353"/>
    <property type="project" value="FlyBase"/>
</dbReference>
<dbReference type="GO" id="GO:0090255">
    <property type="term" value="P:cell proliferation involved in imaginal disc-derived wing morphogenesis"/>
    <property type="evidence" value="ECO:0000315"/>
    <property type="project" value="FlyBase"/>
</dbReference>
<dbReference type="GO" id="GO:0030198">
    <property type="term" value="P:extracellular matrix organization"/>
    <property type="evidence" value="ECO:0000250"/>
    <property type="project" value="FlyBase"/>
</dbReference>
<dbReference type="GO" id="GO:1900115">
    <property type="term" value="P:extracellular regulation of signal transduction"/>
    <property type="evidence" value="ECO:0000314"/>
    <property type="project" value="FlyBase"/>
</dbReference>
<dbReference type="GO" id="GO:0008586">
    <property type="term" value="P:imaginal disc-derived wing vein morphogenesis"/>
    <property type="evidence" value="ECO:0000315"/>
    <property type="project" value="FlyBase"/>
</dbReference>
<dbReference type="GO" id="GO:0030514">
    <property type="term" value="P:negative regulation of BMP signaling pathway"/>
    <property type="evidence" value="ECO:0000315"/>
    <property type="project" value="FlyBase"/>
</dbReference>
<dbReference type="GO" id="GO:0090090">
    <property type="term" value="P:negative regulation of canonical Wnt signaling pathway"/>
    <property type="evidence" value="ECO:0000315"/>
    <property type="project" value="FlyBase"/>
</dbReference>
<dbReference type="GO" id="GO:0030513">
    <property type="term" value="P:positive regulation of BMP signaling pathway"/>
    <property type="evidence" value="ECO:0000315"/>
    <property type="project" value="FlyBase"/>
</dbReference>
<dbReference type="InterPro" id="IPR036116">
    <property type="entry name" value="FN3_sf"/>
</dbReference>
<dbReference type="InterPro" id="IPR019326">
    <property type="entry name" value="NDNF"/>
</dbReference>
<dbReference type="InterPro" id="IPR045805">
    <property type="entry name" value="NDNF_C"/>
</dbReference>
<dbReference type="InterPro" id="IPR055271">
    <property type="entry name" value="NDNF_Fn(III)_1"/>
</dbReference>
<dbReference type="PANTHER" id="PTHR14619">
    <property type="entry name" value="NEURON-DERIVED NEUROTROPHIC FACTOR"/>
    <property type="match status" value="1"/>
</dbReference>
<dbReference type="PANTHER" id="PTHR14619:SF3">
    <property type="entry name" value="PROTEIN NDNF"/>
    <property type="match status" value="1"/>
</dbReference>
<dbReference type="Pfam" id="PF10179">
    <property type="entry name" value="NDNF"/>
    <property type="match status" value="1"/>
</dbReference>
<dbReference type="Pfam" id="PF19433">
    <property type="entry name" value="NDNF_C"/>
    <property type="match status" value="1"/>
</dbReference>
<dbReference type="SUPFAM" id="SSF49265">
    <property type="entry name" value="Fibronectin type III"/>
    <property type="match status" value="1"/>
</dbReference>
<protein>
    <recommendedName>
        <fullName evidence="7">Protein NDNF</fullName>
    </recommendedName>
    <alternativeName>
        <fullName evidence="5">Neuron-derived neurotrophic-like factor</fullName>
    </alternativeName>
    <alternativeName>
        <fullName evidence="6 10">Protein Nord</fullName>
    </alternativeName>
</protein>
<organism evidence="11">
    <name type="scientific">Drosophila melanogaster</name>
    <name type="common">Fruit fly</name>
    <dbReference type="NCBI Taxonomy" id="7227"/>
    <lineage>
        <taxon>Eukaryota</taxon>
        <taxon>Metazoa</taxon>
        <taxon>Ecdysozoa</taxon>
        <taxon>Arthropoda</taxon>
        <taxon>Hexapoda</taxon>
        <taxon>Insecta</taxon>
        <taxon>Pterygota</taxon>
        <taxon>Neoptera</taxon>
        <taxon>Endopterygota</taxon>
        <taxon>Diptera</taxon>
        <taxon>Brachycera</taxon>
        <taxon>Muscomorpha</taxon>
        <taxon>Ephydroidea</taxon>
        <taxon>Drosophilidae</taxon>
        <taxon>Drosophila</taxon>
        <taxon>Sophophora</taxon>
    </lineage>
</organism>
<gene>
    <name evidence="10" type="primary">nord</name>
    <name evidence="10" type="ORF">CG30418</name>
</gene>
<comment type="function">
    <text evidence="3 4">Secretory protein that acts as a feedback regulator of dpp/BMP, wg and hh signaling pathways (PubMed:35037619, PubMed:35609633). In the developing wing, is a dosage-dependent modulator of dpp/BMP signaling involved in wing growth and crossvein patterning; low levels promote and high levels inhibit dpp/BMP signaling (PubMed:35037619, PubMed:35609633). In the early pupal wing, inhibits dpp/BMP signaling activity to prevent the formation of ectopic crossveins in the posterior compartment (PubMed:35037619, PubMed:35609633). Binds to dpp and gbb to modulate their release and activity decreasing dpp/BMP signaling in the responding cells (PubMed:35037619, PubMed:35609633). During wing development regulates dpp/BMP coreceptor dally availability on the cell surface (PubMed:35609633). Might have a role in testis development (PubMed:35609633).</text>
</comment>
<comment type="subunit">
    <text evidence="3 4">Binds heparin (PubMed:35609633). Interacts with dally; the interaction promotes dally degradation (PubMed:35609633). Interacts with dpp and gbb (PubMed:35037619).</text>
</comment>
<comment type="subcellular location">
    <subcellularLocation>
        <location evidence="3 4">Secreted</location>
    </subcellularLocation>
    <subcellularLocation>
        <location evidence="3">Secreted</location>
        <location evidence="3">Extracellular space</location>
        <location evidence="3">Extracellular matrix</location>
    </subcellularLocation>
</comment>
<comment type="developmental stage">
    <text evidence="3 4">Expressed in the wing disks and wing veins, possibly on the surface of hemocytes (at protein level) (PubMed:35609633). Expressed during third-instar larval stage in wing disks in a stripe of cells at the anterior-posterior (A/P) compartment boundary, in the epithelial folds located in the central part of the wing pouch but with diminished expression along the dorsoventral (D/V) boundary (at protein level) (PubMed:35037619, PubMed:35609633). In pupal wings at 24 hrs, after puparium formation (APF), detected in a row of distal anterior cells (at protein level) (PubMed:35037619, PubMed:35609633).</text>
</comment>
<sequence>MQRSTMLPGVELLLLFLLSTSLHAEISHLPMASNRIILDSTELLQNPLIQDAGVPAARATPLPPQKCPSLQRYRKMLKDFDDLEDLYVDVPVHIALAERQRKRFVLNLNDSTPLTIRFSAPVGRKMYYNQTGNPLRPAAVAPGPGVAVGSLVLPCALRGQYDLFVLARHSGALKVDALAEHPQHDWPLLNATHRIAIRTQNRVRKREMIVKWERSKFDFHVMHYCLVIQRLSMDTPRMIFTNFCQAVSAYTDQQPMTPSCAAGGPLEGIWGAPPQRERRLNPRQNVHIVCTGKRRQQLLRRLLPRSSYHLDLFGIHQGRQNLTLRLASSQVNFNRTQPLALKQQALMQLKIGGQHGKQVYSFKVPQTTRQLGEPFMRHLLIPCSGSEIRVKLLRQRSEVGKTEAFYSPTYIRQKGVLPGERYLMRFEPSNDDEALRAQKVMVALSSEALFRDLPELPQNTTVFNVRTRCSRATIAWNGSPDERELSYCIIVFNLPQRNRSVVDFTNYCMDFVPKRVMQYRYFEWMTCRERQQSPDNIETETILNLMPGSSYLVYVTANLSMGKPLPYQALTLHMASQCLDGSHESFY</sequence>
<proteinExistence type="evidence at protein level"/>
<accession>Q9W192</accession>
<accession>Q8SXY4</accession>
<feature type="signal peptide" evidence="1">
    <location>
        <begin position="1"/>
        <end position="24"/>
    </location>
</feature>
<feature type="chain" id="PRO_5015100828" description="Protein NDNF" evidence="1">
    <location>
        <begin position="25"/>
        <end position="587"/>
    </location>
</feature>
<feature type="glycosylation site" description="N-linked (GlcNAc...) asparagine" evidence="2">
    <location>
        <position position="109"/>
    </location>
</feature>
<feature type="glycosylation site" description="N-linked (GlcNAc...) asparagine" evidence="2">
    <location>
        <position position="129"/>
    </location>
</feature>
<feature type="glycosylation site" description="N-linked (GlcNAc...) asparagine" evidence="2">
    <location>
        <position position="190"/>
    </location>
</feature>
<feature type="glycosylation site" description="N-linked (GlcNAc...) asparagine" evidence="2">
    <location>
        <position position="321"/>
    </location>
</feature>
<feature type="glycosylation site" description="N-linked (GlcNAc...) asparagine" evidence="2">
    <location>
        <position position="334"/>
    </location>
</feature>
<feature type="glycosylation site" description="N-linked (GlcNAc...) asparagine" evidence="2">
    <location>
        <position position="459"/>
    </location>
</feature>
<feature type="glycosylation site" description="N-linked (GlcNAc...) asparagine" evidence="2">
    <location>
        <position position="498"/>
    </location>
</feature>
<feature type="glycosylation site" description="N-linked (GlcNAc...) asparagine" evidence="2">
    <location>
        <position position="558"/>
    </location>
</feature>
<feature type="sequence conflict" description="In Ref. 3; AAL68317." evidence="7" ref="3">
    <original>E</original>
    <variation>G</variation>
    <location>
        <position position="403"/>
    </location>
</feature>